<keyword id="KW-0007">Acetylation</keyword>
<keyword id="KW-0175">Coiled coil</keyword>
<keyword id="KW-0963">Cytoplasm</keyword>
<keyword id="KW-0238">DNA-binding</keyword>
<keyword id="KW-0479">Metal-binding</keyword>
<keyword id="KW-0539">Nucleus</keyword>
<keyword id="KW-1185">Reference proteome</keyword>
<keyword id="KW-0804">Transcription</keyword>
<keyword id="KW-0805">Transcription regulation</keyword>
<keyword id="KW-0862">Zinc</keyword>
<reference key="1">
    <citation type="submission" date="2006-02" db="EMBL/GenBank/DDBJ databases">
        <authorList>
            <consortium name="NIH - Mammalian Gene Collection (MGC) project"/>
        </authorList>
    </citation>
    <scope>NUCLEOTIDE SEQUENCE [LARGE SCALE MRNA]</scope>
    <source>
        <strain>Hereford</strain>
        <tissue>Uterus</tissue>
    </source>
</reference>
<evidence type="ECO:0000250" key="1"/>
<evidence type="ECO:0000250" key="2">
    <source>
        <dbReference type="UniProtKB" id="Q9Y692"/>
    </source>
</evidence>
<evidence type="ECO:0000255" key="3"/>
<evidence type="ECO:0000255" key="4">
    <source>
        <dbReference type="PROSITE-ProRule" id="PRU00185"/>
    </source>
</evidence>
<evidence type="ECO:0000256" key="5">
    <source>
        <dbReference type="SAM" id="MobiDB-lite"/>
    </source>
</evidence>
<feature type="initiator methionine" description="Removed" evidence="2">
    <location>
        <position position="1"/>
    </location>
</feature>
<feature type="chain" id="PRO_0000244594" description="Glucocorticoid modulatory element-binding protein 1">
    <location>
        <begin position="2"/>
        <end position="563"/>
    </location>
</feature>
<feature type="domain" description="SAND" evidence="4">
    <location>
        <begin position="72"/>
        <end position="156"/>
    </location>
</feature>
<feature type="region of interest" description="Disordered" evidence="5">
    <location>
        <begin position="360"/>
        <end position="385"/>
    </location>
</feature>
<feature type="coiled-coil region" evidence="3">
    <location>
        <begin position="304"/>
        <end position="355"/>
    </location>
</feature>
<feature type="binding site" evidence="1">
    <location>
        <position position="103"/>
    </location>
    <ligand>
        <name>Zn(2+)</name>
        <dbReference type="ChEBI" id="CHEBI:29105"/>
    </ligand>
</feature>
<feature type="binding site" evidence="1">
    <location>
        <position position="129"/>
    </location>
    <ligand>
        <name>DNA</name>
        <dbReference type="ChEBI" id="CHEBI:16991"/>
    </ligand>
</feature>
<feature type="binding site" evidence="1">
    <location>
        <position position="133"/>
    </location>
    <ligand>
        <name>DNA</name>
        <dbReference type="ChEBI" id="CHEBI:16991"/>
    </ligand>
</feature>
<feature type="binding site" evidence="1">
    <location>
        <position position="136"/>
    </location>
    <ligand>
        <name>DNA</name>
        <dbReference type="ChEBI" id="CHEBI:16991"/>
    </ligand>
</feature>
<feature type="binding site" evidence="1">
    <location>
        <position position="147"/>
    </location>
    <ligand>
        <name>DNA</name>
        <dbReference type="ChEBI" id="CHEBI:16991"/>
    </ligand>
</feature>
<feature type="binding site" evidence="1">
    <location>
        <position position="160"/>
    </location>
    <ligand>
        <name>Zn(2+)</name>
        <dbReference type="ChEBI" id="CHEBI:29105"/>
    </ligand>
</feature>
<feature type="binding site" evidence="1">
    <location>
        <position position="164"/>
    </location>
    <ligand>
        <name>Zn(2+)</name>
        <dbReference type="ChEBI" id="CHEBI:29105"/>
    </ligand>
</feature>
<feature type="binding site" evidence="1">
    <location>
        <position position="168"/>
    </location>
    <ligand>
        <name>Zn(2+)</name>
        <dbReference type="ChEBI" id="CHEBI:29105"/>
    </ligand>
</feature>
<feature type="modified residue" description="N-acetylalanine" evidence="2">
    <location>
        <position position="2"/>
    </location>
</feature>
<proteinExistence type="evidence at transcript level"/>
<comment type="function">
    <text evidence="1">Trans-acting factor that binds to glucocorticoid modulatory elements (GME) present in the TAT (tyrosine aminotransferase) promoter and increases sensitivity to low concentrations of glucocorticoids. Also binds to the transferrin receptor promoter (By similarity).</text>
</comment>
<comment type="subunit">
    <text evidence="1">Homodimer, and heterodimer of GMEB1 and GMEB2. Interacts with TRIM63 (By similarity). Interacts with the glucocorticoid receptor (NR3C1) and NCOA2/TIF2. May interact with HSP27 and CREB-binding protein (CBP) (By similarity).</text>
</comment>
<comment type="subcellular location">
    <subcellularLocation>
        <location evidence="4">Nucleus</location>
    </subcellularLocation>
    <subcellularLocation>
        <location evidence="1">Cytoplasm</location>
    </subcellularLocation>
    <text evidence="1">May be also cytoplasmic.</text>
</comment>
<gene>
    <name type="primary">GMEB1</name>
</gene>
<accession>Q2HJ87</accession>
<organism>
    <name type="scientific">Bos taurus</name>
    <name type="common">Bovine</name>
    <dbReference type="NCBI Taxonomy" id="9913"/>
    <lineage>
        <taxon>Eukaryota</taxon>
        <taxon>Metazoa</taxon>
        <taxon>Chordata</taxon>
        <taxon>Craniata</taxon>
        <taxon>Vertebrata</taxon>
        <taxon>Euteleostomi</taxon>
        <taxon>Mammalia</taxon>
        <taxon>Eutheria</taxon>
        <taxon>Laurasiatheria</taxon>
        <taxon>Artiodactyla</taxon>
        <taxon>Ruminantia</taxon>
        <taxon>Pecora</taxon>
        <taxon>Bovidae</taxon>
        <taxon>Bovinae</taxon>
        <taxon>Bos</taxon>
    </lineage>
</organism>
<dbReference type="EMBL" id="BC113252">
    <property type="protein sequence ID" value="AAI13253.1"/>
    <property type="molecule type" value="mRNA"/>
</dbReference>
<dbReference type="RefSeq" id="NP_001039940.1">
    <property type="nucleotide sequence ID" value="NM_001046475.1"/>
</dbReference>
<dbReference type="SMR" id="Q2HJ87"/>
<dbReference type="FunCoup" id="Q2HJ87">
    <property type="interactions" value="3242"/>
</dbReference>
<dbReference type="STRING" id="9913.ENSBTAP00000001544"/>
<dbReference type="PaxDb" id="9913-ENSBTAP00000001544"/>
<dbReference type="GeneID" id="540374"/>
<dbReference type="KEGG" id="bta:540374"/>
<dbReference type="CTD" id="10691"/>
<dbReference type="eggNOG" id="KOG4333">
    <property type="taxonomic scope" value="Eukaryota"/>
</dbReference>
<dbReference type="InParanoid" id="Q2HJ87"/>
<dbReference type="OrthoDB" id="5792412at2759"/>
<dbReference type="Proteomes" id="UP000009136">
    <property type="component" value="Unplaced"/>
</dbReference>
<dbReference type="GO" id="GO:0005737">
    <property type="term" value="C:cytoplasm"/>
    <property type="evidence" value="ECO:0007669"/>
    <property type="project" value="UniProtKB-SubCell"/>
</dbReference>
<dbReference type="GO" id="GO:0005634">
    <property type="term" value="C:nucleus"/>
    <property type="evidence" value="ECO:0000318"/>
    <property type="project" value="GO_Central"/>
</dbReference>
<dbReference type="GO" id="GO:0046872">
    <property type="term" value="F:metal ion binding"/>
    <property type="evidence" value="ECO:0007669"/>
    <property type="project" value="UniProtKB-KW"/>
</dbReference>
<dbReference type="GO" id="GO:0000978">
    <property type="term" value="F:RNA polymerase II cis-regulatory region sequence-specific DNA binding"/>
    <property type="evidence" value="ECO:0000318"/>
    <property type="project" value="GO_Central"/>
</dbReference>
<dbReference type="GO" id="GO:0006357">
    <property type="term" value="P:regulation of transcription by RNA polymerase II"/>
    <property type="evidence" value="ECO:0000318"/>
    <property type="project" value="GO_Central"/>
</dbReference>
<dbReference type="FunFam" id="3.10.390.10:FF:000003">
    <property type="entry name" value="glucocorticoid modulatory element-binding protein 1 isoform X2"/>
    <property type="match status" value="1"/>
</dbReference>
<dbReference type="Gene3D" id="3.10.390.10">
    <property type="entry name" value="SAND domain-like"/>
    <property type="match status" value="1"/>
</dbReference>
<dbReference type="InterPro" id="IPR010919">
    <property type="entry name" value="SAND-like_dom_sf"/>
</dbReference>
<dbReference type="InterPro" id="IPR000770">
    <property type="entry name" value="SAND_dom"/>
</dbReference>
<dbReference type="PANTHER" id="PTHR10417">
    <property type="entry name" value="GLUCOCORTICOID MODULATORY ELEMENT-BINDING PROTEIN"/>
    <property type="match status" value="1"/>
</dbReference>
<dbReference type="PANTHER" id="PTHR10417:SF3">
    <property type="entry name" value="GLUCOCORTICOID MODULATORY ELEMENT-BINDING PROTEIN 1"/>
    <property type="match status" value="1"/>
</dbReference>
<dbReference type="Pfam" id="PF01342">
    <property type="entry name" value="SAND"/>
    <property type="match status" value="1"/>
</dbReference>
<dbReference type="SMART" id="SM00258">
    <property type="entry name" value="SAND"/>
    <property type="match status" value="1"/>
</dbReference>
<dbReference type="SUPFAM" id="SSF63763">
    <property type="entry name" value="SAND domain-like"/>
    <property type="match status" value="1"/>
</dbReference>
<dbReference type="PROSITE" id="PS50864">
    <property type="entry name" value="SAND"/>
    <property type="match status" value="1"/>
</dbReference>
<sequence length="563" mass="61321">MANAEVSVPVGDVVVVPTEGNEGENPEDTKTQVILQLQPVQQGIYEAGSENNTAVVAVETHTIHKIEEGIDASTIEANEDMEIAYPITCGESKAILLWKKFVCPGINVKCVKFNDQLISPKHFVHLAGKSTLKDWKRAIRLGGIMLRKMMDSGQIDFYQHDKVCSNTCRSTKFDLLISSARAPVPGQQTSVVQTPTSADGSITQIAISEESMEEAGLEWNSALTAAVTMATEEGVKKDSEEISQDTLMFWKGIADVGLMEEVVCNIQKEIEELLRGVQQRLIQAPFQVTDAAVLNNVAHTFGLMDTVKKVLDNRKNQVEQGEEQFLYTLTDLERQLEEQKKQAQDHRLKSQTVQNVVLMPVSTPKPPKRPRLQRPASTTVLSPSPPVHQPQFTVISPITITPVGQSFSMGNIPVATLSQGSSPVTVHTLPSGPQLFRYATVVSSAKSSSPDTVTIHPSSSLALLSSTAMQDGSTLGNMTTMVSPVELVAMESGLTSAIQAVESTSEDGQTIIEIDPAPDPEAEDTEGKAVILETELRTEEKVVAEMEEHQHQVHNVEIVVLED</sequence>
<protein>
    <recommendedName>
        <fullName>Glucocorticoid modulatory element-binding protein 1</fullName>
        <shortName>GMEB-1</shortName>
    </recommendedName>
</protein>
<name>GMEB1_BOVIN</name>